<dbReference type="EMBL" id="CP001080">
    <property type="protein sequence ID" value="ACD66594.1"/>
    <property type="molecule type" value="Genomic_DNA"/>
</dbReference>
<dbReference type="RefSeq" id="WP_012459664.1">
    <property type="nucleotide sequence ID" value="NC_010730.1"/>
</dbReference>
<dbReference type="SMR" id="B2V9H1"/>
<dbReference type="STRING" id="436114.SYO3AOP1_0973"/>
<dbReference type="KEGG" id="sul:SYO3AOP1_0973"/>
<dbReference type="HOGENOM" id="CLU_129938_3_0_0"/>
<dbReference type="GO" id="GO:1990904">
    <property type="term" value="C:ribonucleoprotein complex"/>
    <property type="evidence" value="ECO:0007669"/>
    <property type="project" value="UniProtKB-KW"/>
</dbReference>
<dbReference type="GO" id="GO:0005840">
    <property type="term" value="C:ribosome"/>
    <property type="evidence" value="ECO:0007669"/>
    <property type="project" value="UniProtKB-KW"/>
</dbReference>
<dbReference type="GO" id="GO:0003735">
    <property type="term" value="F:structural constituent of ribosome"/>
    <property type="evidence" value="ECO:0007669"/>
    <property type="project" value="InterPro"/>
</dbReference>
<dbReference type="GO" id="GO:0006412">
    <property type="term" value="P:translation"/>
    <property type="evidence" value="ECO:0007669"/>
    <property type="project" value="UniProtKB-UniRule"/>
</dbReference>
<dbReference type="Gene3D" id="1.10.287.3980">
    <property type="match status" value="1"/>
</dbReference>
<dbReference type="HAMAP" id="MF_00391">
    <property type="entry name" value="Ribosomal_bL34"/>
    <property type="match status" value="1"/>
</dbReference>
<dbReference type="InterPro" id="IPR000271">
    <property type="entry name" value="Ribosomal_bL34"/>
</dbReference>
<dbReference type="NCBIfam" id="TIGR01030">
    <property type="entry name" value="rpmH_bact"/>
    <property type="match status" value="1"/>
</dbReference>
<dbReference type="PANTHER" id="PTHR14503:SF4">
    <property type="entry name" value="LARGE RIBOSOMAL SUBUNIT PROTEIN BL34M"/>
    <property type="match status" value="1"/>
</dbReference>
<dbReference type="PANTHER" id="PTHR14503">
    <property type="entry name" value="MITOCHONDRIAL RIBOSOMAL PROTEIN 34 FAMILY MEMBER"/>
    <property type="match status" value="1"/>
</dbReference>
<dbReference type="Pfam" id="PF00468">
    <property type="entry name" value="Ribosomal_L34"/>
    <property type="match status" value="1"/>
</dbReference>
<reference key="1">
    <citation type="journal article" date="2009" name="J. Bacteriol.">
        <title>Complete and draft genome sequences of six members of the Aquificales.</title>
        <authorList>
            <person name="Reysenbach A.-L."/>
            <person name="Hamamura N."/>
            <person name="Podar M."/>
            <person name="Griffiths E."/>
            <person name="Ferreira S."/>
            <person name="Hochstein R."/>
            <person name="Heidelberg J."/>
            <person name="Johnson J."/>
            <person name="Mead D."/>
            <person name="Pohorille A."/>
            <person name="Sarmiento M."/>
            <person name="Schweighofer K."/>
            <person name="Seshadri R."/>
            <person name="Voytek M.A."/>
        </authorList>
    </citation>
    <scope>NUCLEOTIDE SEQUENCE [LARGE SCALE GENOMIC DNA]</scope>
    <source>
        <strain>YO3AOP1</strain>
    </source>
</reference>
<protein>
    <recommendedName>
        <fullName evidence="1">Large ribosomal subunit protein bL34</fullName>
    </recommendedName>
    <alternativeName>
        <fullName evidence="3">50S ribosomal protein L34</fullName>
    </alternativeName>
</protein>
<organism>
    <name type="scientific">Sulfurihydrogenibium sp. (strain YO3AOP1)</name>
    <dbReference type="NCBI Taxonomy" id="436114"/>
    <lineage>
        <taxon>Bacteria</taxon>
        <taxon>Pseudomonadati</taxon>
        <taxon>Aquificota</taxon>
        <taxon>Aquificia</taxon>
        <taxon>Aquificales</taxon>
        <taxon>Hydrogenothermaceae</taxon>
        <taxon>Sulfurihydrogenibium</taxon>
    </lineage>
</organism>
<sequence>MKAKSHLSNKKRKRASGFLARMKTKAGRKILARRRAKGRKRIAIK</sequence>
<accession>B2V9H1</accession>
<gene>
    <name evidence="1" type="primary">rpmH</name>
    <name type="ordered locus">SYO3AOP1_0973</name>
</gene>
<feature type="chain" id="PRO_1000196128" description="Large ribosomal subunit protein bL34">
    <location>
        <begin position="1"/>
        <end position="45"/>
    </location>
</feature>
<feature type="region of interest" description="Disordered" evidence="2">
    <location>
        <begin position="1"/>
        <end position="45"/>
    </location>
</feature>
<feature type="compositionally biased region" description="Basic residues" evidence="2">
    <location>
        <begin position="1"/>
        <end position="15"/>
    </location>
</feature>
<feature type="compositionally biased region" description="Basic residues" evidence="2">
    <location>
        <begin position="22"/>
        <end position="45"/>
    </location>
</feature>
<evidence type="ECO:0000255" key="1">
    <source>
        <dbReference type="HAMAP-Rule" id="MF_00391"/>
    </source>
</evidence>
<evidence type="ECO:0000256" key="2">
    <source>
        <dbReference type="SAM" id="MobiDB-lite"/>
    </source>
</evidence>
<evidence type="ECO:0000305" key="3"/>
<comment type="similarity">
    <text evidence="1">Belongs to the bacterial ribosomal protein bL34 family.</text>
</comment>
<keyword id="KW-0687">Ribonucleoprotein</keyword>
<keyword id="KW-0689">Ribosomal protein</keyword>
<name>RL34_SULSY</name>
<proteinExistence type="inferred from homology"/>